<gene>
    <name type="ordered locus">SPCG_1551</name>
</gene>
<comment type="function">
    <text evidence="1">Displays ATPase and GTPase activities.</text>
</comment>
<comment type="similarity">
    <text evidence="1">Belongs to the RapZ-like family.</text>
</comment>
<evidence type="ECO:0000255" key="1">
    <source>
        <dbReference type="HAMAP-Rule" id="MF_00636"/>
    </source>
</evidence>
<organism>
    <name type="scientific">Streptococcus pneumoniae (strain CGSP14)</name>
    <dbReference type="NCBI Taxonomy" id="516950"/>
    <lineage>
        <taxon>Bacteria</taxon>
        <taxon>Bacillati</taxon>
        <taxon>Bacillota</taxon>
        <taxon>Bacilli</taxon>
        <taxon>Lactobacillales</taxon>
        <taxon>Streptococcaceae</taxon>
        <taxon>Streptococcus</taxon>
    </lineage>
</organism>
<dbReference type="EMBL" id="CP001033">
    <property type="protein sequence ID" value="ACB90803.1"/>
    <property type="molecule type" value="Genomic_DNA"/>
</dbReference>
<dbReference type="SMR" id="B2IR84"/>
<dbReference type="KEGG" id="spw:SPCG_1551"/>
<dbReference type="HOGENOM" id="CLU_059558_0_0_9"/>
<dbReference type="GO" id="GO:0005524">
    <property type="term" value="F:ATP binding"/>
    <property type="evidence" value="ECO:0007669"/>
    <property type="project" value="UniProtKB-UniRule"/>
</dbReference>
<dbReference type="GO" id="GO:0005525">
    <property type="term" value="F:GTP binding"/>
    <property type="evidence" value="ECO:0007669"/>
    <property type="project" value="UniProtKB-UniRule"/>
</dbReference>
<dbReference type="Gene3D" id="3.40.50.300">
    <property type="entry name" value="P-loop containing nucleotide triphosphate hydrolases"/>
    <property type="match status" value="1"/>
</dbReference>
<dbReference type="HAMAP" id="MF_00636">
    <property type="entry name" value="RapZ_like"/>
    <property type="match status" value="1"/>
</dbReference>
<dbReference type="InterPro" id="IPR027417">
    <property type="entry name" value="P-loop_NTPase"/>
</dbReference>
<dbReference type="InterPro" id="IPR005337">
    <property type="entry name" value="RapZ-like"/>
</dbReference>
<dbReference type="InterPro" id="IPR053930">
    <property type="entry name" value="RapZ-like_N"/>
</dbReference>
<dbReference type="InterPro" id="IPR053931">
    <property type="entry name" value="RapZ_C"/>
</dbReference>
<dbReference type="NCBIfam" id="NF003828">
    <property type="entry name" value="PRK05416.1"/>
    <property type="match status" value="1"/>
</dbReference>
<dbReference type="PANTHER" id="PTHR30448">
    <property type="entry name" value="RNASE ADAPTER PROTEIN RAPZ"/>
    <property type="match status" value="1"/>
</dbReference>
<dbReference type="PANTHER" id="PTHR30448:SF0">
    <property type="entry name" value="RNASE ADAPTER PROTEIN RAPZ"/>
    <property type="match status" value="1"/>
</dbReference>
<dbReference type="Pfam" id="PF22740">
    <property type="entry name" value="PapZ_C"/>
    <property type="match status" value="1"/>
</dbReference>
<dbReference type="Pfam" id="PF03668">
    <property type="entry name" value="RapZ-like_N"/>
    <property type="match status" value="1"/>
</dbReference>
<dbReference type="PIRSF" id="PIRSF005052">
    <property type="entry name" value="P-loopkin"/>
    <property type="match status" value="1"/>
</dbReference>
<dbReference type="SUPFAM" id="SSF52540">
    <property type="entry name" value="P-loop containing nucleoside triphosphate hydrolases"/>
    <property type="match status" value="1"/>
</dbReference>
<reference key="1">
    <citation type="journal article" date="2009" name="BMC Genomics">
        <title>Genome evolution driven by host adaptations results in a more virulent and antimicrobial-resistant Streptococcus pneumoniae serotype 14.</title>
        <authorList>
            <person name="Ding F."/>
            <person name="Tang P."/>
            <person name="Hsu M.-H."/>
            <person name="Cui P."/>
            <person name="Hu S."/>
            <person name="Yu J."/>
            <person name="Chiu C.-H."/>
        </authorList>
    </citation>
    <scope>NUCLEOTIDE SEQUENCE [LARGE SCALE GENOMIC DNA]</scope>
    <source>
        <strain>CGSP14</strain>
    </source>
</reference>
<accession>B2IR84</accession>
<sequence>MTKKQLHLVIVTGMSGAGKTVAIQSFEDLGYFTIDNMPPALLPKFLQLVEIKEDNPKLALVVDMRSRSFFSEIQAVLDELENQDGLDFKILFLDAADKELVARYKETRRSHPLAADGRILDGIKLERELLAPLKNMSQNVVDTTELTPRELRKTLAEQFSDQEQAQSFRIEVMSFGFKYGIPIDADLVFDVRFLPNPYYLPELRNQTGVDEPVYDYVMNHPESEDFYQHLLALIEPILPSYQKEGKSVLTIAMGCTGGQHRSVAFAKRLVQDLSKNWSVNEGHRDKDRRKETVNRS</sequence>
<proteinExistence type="inferred from homology"/>
<protein>
    <recommendedName>
        <fullName evidence="1">Nucleotide-binding protein SPCG_1551</fullName>
    </recommendedName>
</protein>
<name>Y1551_STRPS</name>
<keyword id="KW-0067">ATP-binding</keyword>
<keyword id="KW-0342">GTP-binding</keyword>
<keyword id="KW-0547">Nucleotide-binding</keyword>
<feature type="chain" id="PRO_1000130789" description="Nucleotide-binding protein SPCG_1551">
    <location>
        <begin position="1"/>
        <end position="296"/>
    </location>
</feature>
<feature type="binding site" evidence="1">
    <location>
        <begin position="13"/>
        <end position="20"/>
    </location>
    <ligand>
        <name>ATP</name>
        <dbReference type="ChEBI" id="CHEBI:30616"/>
    </ligand>
</feature>
<feature type="binding site" evidence="1">
    <location>
        <begin position="63"/>
        <end position="66"/>
    </location>
    <ligand>
        <name>GTP</name>
        <dbReference type="ChEBI" id="CHEBI:37565"/>
    </ligand>
</feature>